<evidence type="ECO:0000250" key="1">
    <source>
        <dbReference type="UniProtKB" id="Q80HV8"/>
    </source>
</evidence>
<evidence type="ECO:0000305" key="2"/>
<keyword id="KW-0175">Coiled coil</keyword>
<keyword id="KW-1035">Host cytoplasm</keyword>
<keyword id="KW-0426">Late protein</keyword>
<keyword id="KW-0597">Phosphoprotein</keyword>
<keyword id="KW-1185">Reference proteome</keyword>
<name>PG137_MONPV</name>
<organism>
    <name type="scientific">Monkeypox virus</name>
    <dbReference type="NCBI Taxonomy" id="10244"/>
    <lineage>
        <taxon>Viruses</taxon>
        <taxon>Varidnaviria</taxon>
        <taxon>Bamfordvirae</taxon>
        <taxon>Nucleocytoviricota</taxon>
        <taxon>Pokkesviricetes</taxon>
        <taxon>Chitovirales</taxon>
        <taxon>Poxviridae</taxon>
        <taxon>Chordopoxvirinae</taxon>
        <taxon>Orthopoxvirus</taxon>
    </lineage>
</organism>
<accession>M1L9Q3</accession>
<protein>
    <recommendedName>
        <fullName>Protein OPG137</fullName>
    </recommendedName>
</protein>
<gene>
    <name type="primary">OPG137</name>
    <name type="ORF">MPXVgp122</name>
</gene>
<reference key="1">
    <citation type="journal article" date="2013" name="Am. J. Trop. Med. Hyg.">
        <title>Detection of human monkeypox in the republic of the congo following intensive community education.</title>
        <authorList>
            <person name="Reynolds M.G."/>
            <person name="Emerson G.L."/>
            <person name="Pukuta E."/>
            <person name="Karhemere S."/>
            <person name="Muyembe J.J."/>
            <person name="Bikindou A."/>
            <person name="McCollum A.M."/>
            <person name="Moses C."/>
            <person name="Wilkins K."/>
            <person name="Zhao H."/>
            <person name="Damon I.K."/>
            <person name="Karem K.L."/>
            <person name="Li Y."/>
            <person name="Carroll D.S."/>
            <person name="Mombouli J.V."/>
        </authorList>
    </citation>
    <scope>NUCLEOTIDE SEQUENCE [GENOMIC DNA]</scope>
    <source>
        <strain>ROC2010</strain>
    </source>
</reference>
<reference key="2">
    <citation type="journal article" date="2022" name="J. Infect. Dis.">
        <title>Exportation of Monkeypox virus from the African continent.</title>
        <authorList>
            <person name="Mauldin M.R."/>
            <person name="McCollum A.M."/>
            <person name="Nakazawa Y.J."/>
            <person name="Mandra A."/>
            <person name="Whitehouse E.R."/>
            <person name="Davidson W."/>
            <person name="Zhao H."/>
            <person name="Gao J."/>
            <person name="Li Y."/>
            <person name="Doty J."/>
            <person name="Yinka-Ogunleye A."/>
            <person name="Akinpelu A."/>
            <person name="Aruna O."/>
            <person name="Naidoo D."/>
            <person name="Lewandowski K."/>
            <person name="Afrough B."/>
            <person name="Graham V."/>
            <person name="Aarons E."/>
            <person name="Hewson R."/>
            <person name="Vipond R."/>
            <person name="Dunning J."/>
            <person name="Chand M."/>
            <person name="Brown C."/>
            <person name="Cohen-Gihon I."/>
            <person name="Erez N."/>
            <person name="Shifman O."/>
            <person name="Israeli O."/>
            <person name="Sharon M."/>
            <person name="Schwartz E."/>
            <person name="Beth-Din A."/>
            <person name="Zvi A."/>
            <person name="Mak T.M."/>
            <person name="Ng Y.K."/>
            <person name="Cui L."/>
            <person name="Lin R.T.P."/>
            <person name="Olson V.A."/>
            <person name="Brooks T."/>
            <person name="Paran N."/>
            <person name="Ihekweazu C."/>
            <person name="Reynolds M.G."/>
        </authorList>
    </citation>
    <scope>NUCLEOTIDE SEQUENCE [LARGE SCALE GENOMIC DNA]</scope>
    <source>
        <strain>MPXV-M5312_HM12_Rivers</strain>
    </source>
</reference>
<comment type="function">
    <text evidence="1">Required for viral crescent formation early during virus morphogenesis.</text>
</comment>
<comment type="subunit">
    <text evidence="1">Homomultimer. Interacts with OPG160.</text>
</comment>
<comment type="subcellular location">
    <subcellularLocation>
        <location evidence="1">Host cytoplasm</location>
    </subcellularLocation>
    <text evidence="1">Localizes to the cytoplasmic viral factory. Not incorporated into virus particles. Does not seem to be a transmembrane protein.</text>
</comment>
<comment type="induction">
    <text>Expressed in the late phase of the viral replicative cycle.</text>
</comment>
<comment type="PTM">
    <text evidence="1">Phosphorylated by a OPG054-independent mechanism.</text>
</comment>
<comment type="similarity">
    <text evidence="2">Belongs to the orthopoxvirus OPG137 family.</text>
</comment>
<proteinExistence type="evidence at transcript level"/>
<feature type="chain" id="PRO_0000457507" description="Protein OPG137">
    <location>
        <begin position="1"/>
        <end position="318"/>
    </location>
</feature>
<dbReference type="EMBL" id="KC257461">
    <property type="protein sequence ID" value="AGF37026.1"/>
    <property type="molecule type" value="Genomic_DNA"/>
</dbReference>
<dbReference type="EMBL" id="MT903340">
    <property type="protein sequence ID" value="QNP12992.1"/>
    <property type="molecule type" value="Genomic_DNA"/>
</dbReference>
<dbReference type="RefSeq" id="NP_536549.1">
    <property type="nucleotide sequence ID" value="NC_003310.1"/>
</dbReference>
<dbReference type="RefSeq" id="YP_010377119.1">
    <property type="nucleotide sequence ID" value="NC_063383.1"/>
</dbReference>
<dbReference type="SMR" id="M1L9Q3"/>
<dbReference type="GeneID" id="72551532"/>
<dbReference type="GeneID" id="929008"/>
<dbReference type="KEGG" id="vg:929008"/>
<dbReference type="Proteomes" id="UP000516359">
    <property type="component" value="Genome"/>
</dbReference>
<dbReference type="GO" id="GO:0030430">
    <property type="term" value="C:host cell cytoplasm"/>
    <property type="evidence" value="ECO:0007669"/>
    <property type="project" value="UniProtKB-SubCell"/>
</dbReference>
<dbReference type="InterPro" id="IPR007755">
    <property type="entry name" value="Poxvirus_A11"/>
</dbReference>
<dbReference type="Pfam" id="PF05061">
    <property type="entry name" value="Pox_A11"/>
    <property type="match status" value="1"/>
</dbReference>
<sequence>MTTVPVTDIQNDLITEFSEDNYPSNKNYEITLRQMSILTHVNNVVDREHNAAVVSSPEEISSQLNEDLFPDDDSPATIIERVQPHTTIIDDTPPPTFRRELLISEQRQQREKRFNITVSKNSEAIMESRSMITSMPTQTPSLGVVYDKDKRIQMLEDEVVNLRNQRSNTKSSDNLDNFTRILFGKTPYKSTEVNKRIAIVNYANLNGSPLSVEDLDVCSEDEIDRIYKTIKQYHESRKRKIIVTNVIIIVINIIEQALLKLGFEEIKGLSTDITSEIIDVEIGDDCDAVASKLGIGNSPVLNIVLFILKIFVKRIKII</sequence>
<organismHost>
    <name type="scientific">Cynomys gunnisoni</name>
    <name type="common">Gunnison's prairie dog</name>
    <name type="synonym">Spermophilus gunnisoni</name>
    <dbReference type="NCBI Taxonomy" id="45479"/>
</organismHost>
<organismHost>
    <name type="scientific">Cynomys leucurus</name>
    <name type="common">White-tailed prairie dog</name>
    <dbReference type="NCBI Taxonomy" id="99825"/>
</organismHost>
<organismHost>
    <name type="scientific">Cynomys ludovicianus</name>
    <name type="common">Black-tailed prairie dog</name>
    <dbReference type="NCBI Taxonomy" id="45480"/>
</organismHost>
<organismHost>
    <name type="scientific">Cynomys mexicanus</name>
    <name type="common">Mexican prairie dog</name>
    <dbReference type="NCBI Taxonomy" id="99826"/>
</organismHost>
<organismHost>
    <name type="scientific">Cynomys parvidens</name>
    <name type="common">Utah prairie dog</name>
    <dbReference type="NCBI Taxonomy" id="99827"/>
</organismHost>
<organismHost>
    <name type="scientific">Gliridae</name>
    <name type="common">dormice</name>
    <dbReference type="NCBI Taxonomy" id="30650"/>
</organismHost>
<organismHost>
    <name type="scientific">Heliosciurus ruwenzorii</name>
    <name type="common">Ruwenzori sun squirrel</name>
    <dbReference type="NCBI Taxonomy" id="226685"/>
</organismHost>
<organismHost>
    <name type="scientific">Homo sapiens</name>
    <name type="common">Human</name>
    <dbReference type="NCBI Taxonomy" id="9606"/>
</organismHost>
<organismHost>
    <name type="scientific">Mus musculus</name>
    <name type="common">Mouse</name>
    <dbReference type="NCBI Taxonomy" id="10090"/>
</organismHost>